<protein>
    <recommendedName>
        <fullName evidence="3">Lantibiotic Flvbeta.b</fullName>
    </recommendedName>
</protein>
<feature type="propeptide" id="PRO_0000450398" description="Cleaved by FlvT" evidence="5">
    <location>
        <begin position="1"/>
        <end position="34"/>
    </location>
</feature>
<feature type="peptide" id="PRO_0000450399" description="Lantibiotic Flvbeta.b" evidence="5">
    <location>
        <begin position="35"/>
        <end position="67"/>
    </location>
</feature>
<feature type="modified residue" description="2,3-didehydroalanine (Ser); by FlvM2" evidence="5">
    <location>
        <position position="36"/>
    </location>
</feature>
<feature type="modified residue" description="2,3-didehydrobutyrine; by FlvM2" evidence="5">
    <location>
        <position position="39"/>
    </location>
</feature>
<feature type="modified residue" description="2,3-didehydrobutyrine; by FlvM2" evidence="5">
    <location>
        <position position="43"/>
    </location>
</feature>
<feature type="cross-link" description="Beta-methyllanthionine (Thr-Cys); by FlvM2" evidence="5">
    <location>
        <begin position="50"/>
        <end position="56"/>
    </location>
</feature>
<feature type="cross-link" description="Beta-methyllanthionine (Thr-Cys); by FlvM2" evidence="5">
    <location>
        <begin position="58"/>
        <end position="61"/>
    </location>
</feature>
<feature type="cross-link" description="Beta-methyllanthionine (Thr-Cys); by FlvM2" evidence="5">
    <location>
        <begin position="62"/>
        <end position="65"/>
    </location>
</feature>
<comment type="function">
    <text evidence="1 2">Lanthionine-containing peptide antibiotic (lantibiotic) only active on Gram-positive bacteria in synergy with Flvalpha.a (PubMed:27028884). Is not active in absence of Flvalpha.a, which is encoded by the same operon than Flvbeta.b (PubMed:27028884). The bactericidal activity of lantibiotics is based on depolarization of energized bacterial cytoplasmic membranes, initiated by the formation of aqueous transmembrane pores (By similarity).</text>
</comment>
<comment type="subcellular location">
    <subcellularLocation>
        <location evidence="4">Secreted</location>
    </subcellularLocation>
</comment>
<comment type="PTM">
    <text evidence="2">Contains DL-beta-methyllanthionine, when coepressed in E.coli with the flavecin synthetase FlvM2.</text>
</comment>
<sequence length="67" mass="7089">MDNNTKLQKLYEQLAATGSEKELDAMLDENMAGAGSPLTVTITGLIVAATTGFDWCPTGACTYSCRV</sequence>
<proteinExistence type="inferred from homology"/>
<organism>
    <name type="scientific">Ruminococcus flavefaciens</name>
    <dbReference type="NCBI Taxonomy" id="1265"/>
    <lineage>
        <taxon>Bacteria</taxon>
        <taxon>Bacillati</taxon>
        <taxon>Bacillota</taxon>
        <taxon>Clostridia</taxon>
        <taxon>Eubacteriales</taxon>
        <taxon>Oscillospiraceae</taxon>
        <taxon>Ruminococcus</taxon>
    </lineage>
</organism>
<accession>P0DQL4</accession>
<reference key="1">
    <citation type="journal article" date="2016" name="Cell Chem. Biol.">
        <title>Structural characterization and bioactivity analysis of the two-component lantibiotic Flv system from a ruminant bacterium.</title>
        <authorList>
            <person name="Zhao X."/>
            <person name="van der Donk W.A."/>
        </authorList>
    </citation>
    <scope>NUCLEOTIDE SEQUENCE [GENOMIC DNA]</scope>
    <scope>EXPRESSION IN E.COLI</scope>
    <scope>DEHYDRATION AT SER-36; THR-39 AND THR-43</scope>
    <scope>METHYLLANTHIONINE CROSS-LINKS</scope>
    <source>
        <strain>FD-1</strain>
    </source>
</reference>
<dbReference type="GO" id="GO:0005576">
    <property type="term" value="C:extracellular region"/>
    <property type="evidence" value="ECO:0007669"/>
    <property type="project" value="UniProtKB-SubCell"/>
</dbReference>
<dbReference type="GO" id="GO:0005102">
    <property type="term" value="F:signaling receptor binding"/>
    <property type="evidence" value="ECO:0007669"/>
    <property type="project" value="UniProtKB-KW"/>
</dbReference>
<dbReference type="GO" id="GO:0042742">
    <property type="term" value="P:defense response to bacterium"/>
    <property type="evidence" value="ECO:0007669"/>
    <property type="project" value="UniProtKB-KW"/>
</dbReference>
<dbReference type="GO" id="GO:0031640">
    <property type="term" value="P:killing of cells of another organism"/>
    <property type="evidence" value="ECO:0007669"/>
    <property type="project" value="UniProtKB-KW"/>
</dbReference>
<dbReference type="NCBIfam" id="NF038161">
    <property type="entry name" value="lant_II_LchA2"/>
    <property type="match status" value="1"/>
</dbReference>
<keyword id="KW-0044">Antibiotic</keyword>
<keyword id="KW-0929">Antimicrobial</keyword>
<keyword id="KW-0078">Bacteriocin</keyword>
<keyword id="KW-0425">Lantibiotic</keyword>
<keyword id="KW-0964">Secreted</keyword>
<keyword id="KW-0883">Thioether bond</keyword>
<name>LAN2B_RUMFL</name>
<evidence type="ECO:0000250" key="1">
    <source>
        <dbReference type="UniProtKB" id="P86475"/>
    </source>
</evidence>
<evidence type="ECO:0000269" key="2">
    <source>
    </source>
</evidence>
<evidence type="ECO:0000303" key="3">
    <source>
    </source>
</evidence>
<evidence type="ECO:0000305" key="4"/>
<evidence type="ECO:0000305" key="5">
    <source>
    </source>
</evidence>
<gene>
    <name evidence="3" type="primary">FlvA2.b</name>
</gene>